<comment type="function">
    <text evidence="4">2-oxoglutarate (OG)- and Fe(II)-dependent dioxygenase (2OGD) involved in scopoletin and umbelliferone biosynthesis (PubMed:22168819). Converts feruloyl CoA into 6'-hydroxyferuloyl CoA, and p-coumaroyl CoA into 2,4-dihydroxycinnamoyl-CoA (PubMed:22168819). Has no activity with cinnamic acid, caffeic acid, p-coumaric acid, ferulic acid, cinnamoyl-CoA and caffeoyl-CoA (PubMed:22168819).</text>
</comment>
<comment type="catalytic activity">
    <reaction evidence="4">
        <text>(E)-4-coumaroyl-CoA + 2-oxoglutarate + O2 = (E)-2,4-dihydroxycinnamoyl-CoA + succinate + CO2</text>
        <dbReference type="Rhea" id="RHEA:57868"/>
        <dbReference type="ChEBI" id="CHEBI:15379"/>
        <dbReference type="ChEBI" id="CHEBI:16526"/>
        <dbReference type="ChEBI" id="CHEBI:16810"/>
        <dbReference type="ChEBI" id="CHEBI:30031"/>
        <dbReference type="ChEBI" id="CHEBI:85008"/>
        <dbReference type="ChEBI" id="CHEBI:142398"/>
        <dbReference type="EC" id="1.14.11.62"/>
    </reaction>
</comment>
<comment type="catalytic activity">
    <reaction evidence="4">
        <text>(E)-feruloyl-CoA + 2-oxoglutarate + O2 = (E)-6-hydroxyferuloyl-CoA + succinate + CO2</text>
        <dbReference type="Rhea" id="RHEA:57856"/>
        <dbReference type="ChEBI" id="CHEBI:15379"/>
        <dbReference type="ChEBI" id="CHEBI:16526"/>
        <dbReference type="ChEBI" id="CHEBI:16810"/>
        <dbReference type="ChEBI" id="CHEBI:30031"/>
        <dbReference type="ChEBI" id="CHEBI:87305"/>
        <dbReference type="ChEBI" id="CHEBI:142390"/>
        <dbReference type="EC" id="1.14.11.61"/>
    </reaction>
</comment>
<comment type="cofactor">
    <cofactor evidence="2">
        <name>L-ascorbate</name>
        <dbReference type="ChEBI" id="CHEBI:38290"/>
    </cofactor>
</comment>
<comment type="cofactor">
    <cofactor evidence="3">
        <name>Fe(2+)</name>
        <dbReference type="ChEBI" id="CHEBI:29033"/>
    </cofactor>
    <text evidence="3">Binds 1 Fe(2+) ion per subunit.</text>
</comment>
<comment type="activity regulation">
    <text evidence="4">Repressed by the competitive inhibitor psoralen, but not by umbelliferone, xanthotoxin, bergapten and isopimpinellin.</text>
</comment>
<comment type="biophysicochemical properties">
    <kinetics>
        <KM evidence="4">37 uM for feruloyl-CoA</KM>
        <KM evidence="4">50 uM for p-coumaroyl-CoA</KM>
        <text evidence="4">kcat is 0.46 sec(-1) with feruloyl-CoA as substrate (PubMed:22168819). kcat is 0.71 sec(-1) with p-coumaroyl-CoA as substrate (PubMed:22168819).</text>
    </kinetics>
</comment>
<comment type="pathway">
    <text evidence="4">Phenylpropanoid metabolism.</text>
</comment>
<comment type="induction">
    <text evidence="4">Induced by UV-B in leaves and petioles, but not in roots and stems.</text>
</comment>
<comment type="similarity">
    <text evidence="6">Belongs to the iron/ascorbate-dependent oxidoreductase family.</text>
</comment>
<dbReference type="EC" id="1.14.11.61" evidence="3 4"/>
<dbReference type="EC" id="1.14.11.62" evidence="3 4"/>
<dbReference type="EMBL" id="GU460158">
    <property type="protein sequence ID" value="ADV77970.1"/>
    <property type="molecule type" value="mRNA"/>
</dbReference>
<dbReference type="SMR" id="W5QJZ5"/>
<dbReference type="BioCyc" id="MetaCyc:MONOMER-17096"/>
<dbReference type="GO" id="GO:0016706">
    <property type="term" value="F:2-oxoglutarate-dependent dioxygenase activity"/>
    <property type="evidence" value="ECO:0000314"/>
    <property type="project" value="UniProtKB"/>
</dbReference>
<dbReference type="GO" id="GO:0102312">
    <property type="term" value="F:4-coumaroyl 2'-hydroxylase activity"/>
    <property type="evidence" value="ECO:0007669"/>
    <property type="project" value="UniProtKB-EC"/>
</dbReference>
<dbReference type="GO" id="GO:0046872">
    <property type="term" value="F:metal ion binding"/>
    <property type="evidence" value="ECO:0007669"/>
    <property type="project" value="UniProtKB-KW"/>
</dbReference>
<dbReference type="GO" id="GO:0009805">
    <property type="term" value="P:coumarin biosynthetic process"/>
    <property type="evidence" value="ECO:0000314"/>
    <property type="project" value="UniProtKB"/>
</dbReference>
<dbReference type="GO" id="GO:0009699">
    <property type="term" value="P:phenylpropanoid biosynthetic process"/>
    <property type="evidence" value="ECO:0000314"/>
    <property type="project" value="UniProtKB"/>
</dbReference>
<dbReference type="GO" id="GO:0010224">
    <property type="term" value="P:response to UV-B"/>
    <property type="evidence" value="ECO:0000270"/>
    <property type="project" value="UniProtKB"/>
</dbReference>
<dbReference type="FunFam" id="2.60.120.330:FF:000023">
    <property type="entry name" value="Feruloyl CoA ortho-hydroxylase 1"/>
    <property type="match status" value="1"/>
</dbReference>
<dbReference type="Gene3D" id="2.60.120.330">
    <property type="entry name" value="B-lactam Antibiotic, Isopenicillin N Synthase, Chain"/>
    <property type="match status" value="1"/>
</dbReference>
<dbReference type="InterPro" id="IPR026992">
    <property type="entry name" value="DIOX_N"/>
</dbReference>
<dbReference type="InterPro" id="IPR044861">
    <property type="entry name" value="IPNS-like_FE2OG_OXY"/>
</dbReference>
<dbReference type="InterPro" id="IPR027443">
    <property type="entry name" value="IPNS-like_sf"/>
</dbReference>
<dbReference type="InterPro" id="IPR005123">
    <property type="entry name" value="Oxoglu/Fe-dep_dioxygenase_dom"/>
</dbReference>
<dbReference type="PANTHER" id="PTHR10209:SF243">
    <property type="entry name" value="FERULOYL COA ORTHO-HYDROXYLASE 1-RELATED"/>
    <property type="match status" value="1"/>
</dbReference>
<dbReference type="PANTHER" id="PTHR10209">
    <property type="entry name" value="OXIDOREDUCTASE, 2OG-FE II OXYGENASE FAMILY PROTEIN"/>
    <property type="match status" value="1"/>
</dbReference>
<dbReference type="Pfam" id="PF03171">
    <property type="entry name" value="2OG-FeII_Oxy"/>
    <property type="match status" value="1"/>
</dbReference>
<dbReference type="Pfam" id="PF14226">
    <property type="entry name" value="DIOX_N"/>
    <property type="match status" value="1"/>
</dbReference>
<dbReference type="SUPFAM" id="SSF51197">
    <property type="entry name" value="Clavaminate synthase-like"/>
    <property type="match status" value="1"/>
</dbReference>
<dbReference type="PROSITE" id="PS51471">
    <property type="entry name" value="FE2OG_OXY"/>
    <property type="match status" value="1"/>
</dbReference>
<proteinExistence type="evidence at protein level"/>
<sequence length="367" mass="41821">MAPTKDSVIHMGAESWDEISEFVTKKGHGVKGLSELGIKTLPKQFHQPLEERFSEKKILERASIPLIDMSKWDSPEVVKSICDAAEHWGFFQIVNHGVPLETLQRVKEATHRFFALPAEEKNKYSKENSPINNVRFGSSFVPHVEKALEWKDFLSMFYVSEEETNTYWPPICRDEMLEYMRSSEVLIKRLMEVLVVKGLKVKQIDEIREPMLVGSRRINLNYYPKCPNPELTLGVGRHSDISTFTILLQDEIGGLHVRKLDDTGNTWVHVTPISGSLIINIGDALQIMSNGRYKSIEHMVVANGTQDRISVPLFVNPKPQAILCPFPEVLANGEKPVYKPVLCSDYSRHFYTKPHDGKKTVDFALMN</sequence>
<keyword id="KW-0223">Dioxygenase</keyword>
<keyword id="KW-0408">Iron</keyword>
<keyword id="KW-0479">Metal-binding</keyword>
<keyword id="KW-0560">Oxidoreductase</keyword>
<gene>
    <name evidence="5" type="primary">DIOX4</name>
</gene>
<accession>W5QJZ5</accession>
<name>DIOX4_RUTGR</name>
<protein>
    <recommendedName>
        <fullName evidence="5">Bi-functional coumaroyl CoA and feruloyl CoA ortho-hydroxylase Diox4</fullName>
        <ecNumber evidence="3 4">1.14.11.61</ecNumber>
        <ecNumber evidence="3 4">1.14.11.62</ecNumber>
    </recommendedName>
    <alternativeName>
        <fullName evidence="5">2-oxoglutarate-dependent dioxygenase 4</fullName>
        <shortName evidence="5">2OGD Diox4</shortName>
    </alternativeName>
</protein>
<evidence type="ECO:0000250" key="1">
    <source>
        <dbReference type="UniProtKB" id="D4N500"/>
    </source>
</evidence>
<evidence type="ECO:0000250" key="2">
    <source>
        <dbReference type="UniProtKB" id="Q9C899"/>
    </source>
</evidence>
<evidence type="ECO:0000255" key="3">
    <source>
        <dbReference type="PROSITE-ProRule" id="PRU00805"/>
    </source>
</evidence>
<evidence type="ECO:0000269" key="4">
    <source>
    </source>
</evidence>
<evidence type="ECO:0000303" key="5">
    <source>
    </source>
</evidence>
<evidence type="ECO:0000305" key="6"/>
<reference key="1">
    <citation type="journal article" date="2012" name="Plant J.">
        <title>A 2-oxoglutarate-dependent dioxygenase from Ruta graveolens L. exhibits p-coumaroyl CoA 2'-hydroxylase activity (C2'H): a missing step in the synthesis of umbelliferone in plants.</title>
        <authorList>
            <person name="Vialart G."/>
            <person name="Hehn A."/>
            <person name="Olry A."/>
            <person name="Ito K."/>
            <person name="Krieger C."/>
            <person name="Larbat R."/>
            <person name="Paris C."/>
            <person name="Shimizu B."/>
            <person name="Sugimoto Y."/>
            <person name="Mizutani M."/>
            <person name="Bourgaud F."/>
        </authorList>
    </citation>
    <scope>NUCLEOTIDE SEQUENCE [MRNA]</scope>
    <scope>FUNCTION</scope>
    <scope>CATALYTIC ACTIVITY</scope>
    <scope>BIOPHYSICOCHEMICAL PROPERTIES</scope>
    <scope>INDUCTION BY UV-B LIGHT</scope>
    <scope>ACTIVITY REGULATION</scope>
    <scope>PATHWAY</scope>
</reference>
<feature type="chain" id="PRO_0000447361" description="Bi-functional coumaroyl CoA and feruloyl CoA ortho-hydroxylase Diox4">
    <location>
        <begin position="1"/>
        <end position="367"/>
    </location>
</feature>
<feature type="domain" description="Fe2OG dioxygenase" evidence="3">
    <location>
        <begin position="207"/>
        <end position="317"/>
    </location>
</feature>
<feature type="binding site" evidence="1">
    <location>
        <position position="223"/>
    </location>
    <ligand>
        <name>2-oxoglutarate</name>
        <dbReference type="ChEBI" id="CHEBI:16810"/>
    </ligand>
</feature>
<feature type="binding site" evidence="3">
    <location>
        <position position="238"/>
    </location>
    <ligand>
        <name>Fe cation</name>
        <dbReference type="ChEBI" id="CHEBI:24875"/>
    </ligand>
</feature>
<feature type="binding site" evidence="3">
    <location>
        <position position="240"/>
    </location>
    <ligand>
        <name>Fe cation</name>
        <dbReference type="ChEBI" id="CHEBI:24875"/>
    </ligand>
</feature>
<feature type="binding site" evidence="3">
    <location>
        <position position="298"/>
    </location>
    <ligand>
        <name>Fe cation</name>
        <dbReference type="ChEBI" id="CHEBI:24875"/>
    </ligand>
</feature>
<feature type="binding site" evidence="3">
    <location>
        <position position="308"/>
    </location>
    <ligand>
        <name>2-oxoglutarate</name>
        <dbReference type="ChEBI" id="CHEBI:16810"/>
    </ligand>
</feature>
<feature type="binding site" evidence="1">
    <location>
        <position position="310"/>
    </location>
    <ligand>
        <name>2-oxoglutarate</name>
        <dbReference type="ChEBI" id="CHEBI:16810"/>
    </ligand>
</feature>
<organism>
    <name type="scientific">Ruta graveolens</name>
    <name type="common">Common rue</name>
    <dbReference type="NCBI Taxonomy" id="37565"/>
    <lineage>
        <taxon>Eukaryota</taxon>
        <taxon>Viridiplantae</taxon>
        <taxon>Streptophyta</taxon>
        <taxon>Embryophyta</taxon>
        <taxon>Tracheophyta</taxon>
        <taxon>Spermatophyta</taxon>
        <taxon>Magnoliopsida</taxon>
        <taxon>eudicotyledons</taxon>
        <taxon>Gunneridae</taxon>
        <taxon>Pentapetalae</taxon>
        <taxon>rosids</taxon>
        <taxon>malvids</taxon>
        <taxon>Sapindales</taxon>
        <taxon>Rutaceae</taxon>
        <taxon>Rutoideae</taxon>
        <taxon>Ruta</taxon>
    </lineage>
</organism>